<keyword id="KW-1003">Cell membrane</keyword>
<keyword id="KW-0210">Decarboxylase</keyword>
<keyword id="KW-0285">Flavoprotein</keyword>
<keyword id="KW-0288">FMN</keyword>
<keyword id="KW-0456">Lyase</keyword>
<keyword id="KW-0464">Manganese</keyword>
<keyword id="KW-0472">Membrane</keyword>
<keyword id="KW-0479">Metal-binding</keyword>
<keyword id="KW-1185">Reference proteome</keyword>
<keyword id="KW-0831">Ubiquinone biosynthesis</keyword>
<proteinExistence type="inferred from homology"/>
<sequence>MKYKDLRDFLVQLEQRGDLKRVDIEVDPHLEMTEICDRLLKQAGPAVLFERPAGHTIPVLGNLFGTPERVALGMGQTSVSALREVGKLLAYLKEPDPPKGLRDAWEKLPVLKQVLNMAPKQLASAPCQEIIWEGADVDLGKLPIQTCWPGDVAPLITWGLTVTRGPHKSRQNLGIYRQQVIAPNKVIMRWLAHRGGALDYRDFCQIYPGQPYPVAVALGADPATILGAVTPVPDSLSEYQFAGLLRGAKTEVVKCLTHDLQVPASAEIVLEGYIHPDEMAVEGPYGDHTGYYNEQETFPVFTIERITMRRNPIYHSTYTGKPPDEPAILGVALNEVFVPLLQKQFTEITDFYLPPEGCSYRLAVVSMKKQYPGHAKRVMFGIWSFLRQFMYTKFIIVTDDDIDIRDWKEVVWAMTTRVDPVRDTLIVENTPIDYLDFASPVSGLGSKMGLDATNKWPGETTREWGCPIEMDAAVKTRIDHLWQQLPF</sequence>
<gene>
    <name evidence="1" type="primary">ubiD</name>
    <name type="ordered locus">NE1839</name>
</gene>
<feature type="chain" id="PRO_0000267675" description="3-octaprenyl-4-hydroxybenzoate carboxy-lyase">
    <location>
        <begin position="1"/>
        <end position="487"/>
    </location>
</feature>
<feature type="active site" description="Proton donor" evidence="1">
    <location>
        <position position="287"/>
    </location>
</feature>
<feature type="binding site" evidence="1">
    <location>
        <position position="172"/>
    </location>
    <ligand>
        <name>Mn(2+)</name>
        <dbReference type="ChEBI" id="CHEBI:29035"/>
    </ligand>
</feature>
<feature type="binding site" evidence="1">
    <location>
        <begin position="175"/>
        <end position="177"/>
    </location>
    <ligand>
        <name>prenylated FMN</name>
        <dbReference type="ChEBI" id="CHEBI:87746"/>
    </ligand>
</feature>
<feature type="binding site" evidence="1">
    <location>
        <begin position="189"/>
        <end position="191"/>
    </location>
    <ligand>
        <name>prenylated FMN</name>
        <dbReference type="ChEBI" id="CHEBI:87746"/>
    </ligand>
</feature>
<feature type="binding site" evidence="1">
    <location>
        <begin position="194"/>
        <end position="195"/>
    </location>
    <ligand>
        <name>prenylated FMN</name>
        <dbReference type="ChEBI" id="CHEBI:87746"/>
    </ligand>
</feature>
<feature type="binding site" evidence="1">
    <location>
        <position position="238"/>
    </location>
    <ligand>
        <name>Mn(2+)</name>
        <dbReference type="ChEBI" id="CHEBI:29035"/>
    </ligand>
</feature>
<evidence type="ECO:0000255" key="1">
    <source>
        <dbReference type="HAMAP-Rule" id="MF_01636"/>
    </source>
</evidence>
<protein>
    <recommendedName>
        <fullName evidence="1">3-octaprenyl-4-hydroxybenzoate carboxy-lyase</fullName>
        <ecNumber evidence="1">4.1.1.98</ecNumber>
    </recommendedName>
    <alternativeName>
        <fullName evidence="1">Polyprenyl p-hydroxybenzoate decarboxylase</fullName>
    </alternativeName>
</protein>
<accession>Q82TP1</accession>
<name>UBID_NITEU</name>
<dbReference type="EC" id="4.1.1.98" evidence="1"/>
<dbReference type="EMBL" id="AL954747">
    <property type="protein sequence ID" value="CAD85750.1"/>
    <property type="molecule type" value="Genomic_DNA"/>
</dbReference>
<dbReference type="RefSeq" id="WP_011112381.1">
    <property type="nucleotide sequence ID" value="NC_004757.1"/>
</dbReference>
<dbReference type="SMR" id="Q82TP1"/>
<dbReference type="STRING" id="228410.NE1839"/>
<dbReference type="GeneID" id="87104998"/>
<dbReference type="KEGG" id="neu:NE1839"/>
<dbReference type="eggNOG" id="COG0043">
    <property type="taxonomic scope" value="Bacteria"/>
</dbReference>
<dbReference type="HOGENOM" id="CLU_023348_4_1_4"/>
<dbReference type="OrthoDB" id="9809841at2"/>
<dbReference type="PhylomeDB" id="Q82TP1"/>
<dbReference type="UniPathway" id="UPA00232"/>
<dbReference type="Proteomes" id="UP000001416">
    <property type="component" value="Chromosome"/>
</dbReference>
<dbReference type="GO" id="GO:0005829">
    <property type="term" value="C:cytosol"/>
    <property type="evidence" value="ECO:0007669"/>
    <property type="project" value="TreeGrafter"/>
</dbReference>
<dbReference type="GO" id="GO:0005886">
    <property type="term" value="C:plasma membrane"/>
    <property type="evidence" value="ECO:0007669"/>
    <property type="project" value="UniProtKB-SubCell"/>
</dbReference>
<dbReference type="GO" id="GO:0008694">
    <property type="term" value="F:3-octaprenyl-4-hydroxybenzoate carboxy-lyase activity"/>
    <property type="evidence" value="ECO:0007669"/>
    <property type="project" value="UniProtKB-UniRule"/>
</dbReference>
<dbReference type="GO" id="GO:0046872">
    <property type="term" value="F:metal ion binding"/>
    <property type="evidence" value="ECO:0007669"/>
    <property type="project" value="UniProtKB-KW"/>
</dbReference>
<dbReference type="GO" id="GO:0006744">
    <property type="term" value="P:ubiquinone biosynthetic process"/>
    <property type="evidence" value="ECO:0007669"/>
    <property type="project" value="UniProtKB-UniRule"/>
</dbReference>
<dbReference type="FunFam" id="3.40.1670.10:FF:000001">
    <property type="entry name" value="3-octaprenyl-4-hydroxybenzoate carboxy-lyase"/>
    <property type="match status" value="1"/>
</dbReference>
<dbReference type="Gene3D" id="1.20.5.570">
    <property type="entry name" value="Single helix bin"/>
    <property type="match status" value="1"/>
</dbReference>
<dbReference type="Gene3D" id="3.40.1670.10">
    <property type="entry name" value="UbiD C-terminal domain-like"/>
    <property type="match status" value="1"/>
</dbReference>
<dbReference type="HAMAP" id="MF_01636">
    <property type="entry name" value="UbiD"/>
    <property type="match status" value="1"/>
</dbReference>
<dbReference type="InterPro" id="IPR002830">
    <property type="entry name" value="UbiD"/>
</dbReference>
<dbReference type="InterPro" id="IPR049381">
    <property type="entry name" value="UbiD-like_C"/>
</dbReference>
<dbReference type="InterPro" id="IPR049383">
    <property type="entry name" value="UbiD-like_N"/>
</dbReference>
<dbReference type="InterPro" id="IPR023677">
    <property type="entry name" value="UbiD_bacteria"/>
</dbReference>
<dbReference type="InterPro" id="IPR048304">
    <property type="entry name" value="UbiD_Rift_dom"/>
</dbReference>
<dbReference type="NCBIfam" id="NF008175">
    <property type="entry name" value="PRK10922.1"/>
    <property type="match status" value="1"/>
</dbReference>
<dbReference type="NCBIfam" id="TIGR00148">
    <property type="entry name" value="UbiD family decarboxylase"/>
    <property type="match status" value="1"/>
</dbReference>
<dbReference type="PANTHER" id="PTHR30108">
    <property type="entry name" value="3-OCTAPRENYL-4-HYDROXYBENZOATE CARBOXY-LYASE-RELATED"/>
    <property type="match status" value="1"/>
</dbReference>
<dbReference type="PANTHER" id="PTHR30108:SF17">
    <property type="entry name" value="FERULIC ACID DECARBOXYLASE 1"/>
    <property type="match status" value="1"/>
</dbReference>
<dbReference type="Pfam" id="PF01977">
    <property type="entry name" value="UbiD"/>
    <property type="match status" value="1"/>
</dbReference>
<dbReference type="Pfam" id="PF20696">
    <property type="entry name" value="UbiD_C"/>
    <property type="match status" value="1"/>
</dbReference>
<dbReference type="Pfam" id="PF20695">
    <property type="entry name" value="UbiD_N"/>
    <property type="match status" value="1"/>
</dbReference>
<dbReference type="SUPFAM" id="SSF50475">
    <property type="entry name" value="FMN-binding split barrel"/>
    <property type="match status" value="1"/>
</dbReference>
<dbReference type="SUPFAM" id="SSF143968">
    <property type="entry name" value="UbiD C-terminal domain-like"/>
    <property type="match status" value="1"/>
</dbReference>
<reference key="1">
    <citation type="journal article" date="2003" name="J. Bacteriol.">
        <title>Complete genome sequence of the ammonia-oxidizing bacterium and obligate chemolithoautotroph Nitrosomonas europaea.</title>
        <authorList>
            <person name="Chain P."/>
            <person name="Lamerdin J.E."/>
            <person name="Larimer F.W."/>
            <person name="Regala W."/>
            <person name="Lao V."/>
            <person name="Land M.L."/>
            <person name="Hauser L."/>
            <person name="Hooper A.B."/>
            <person name="Klotz M.G."/>
            <person name="Norton J."/>
            <person name="Sayavedra-Soto L.A."/>
            <person name="Arciero D.M."/>
            <person name="Hommes N.G."/>
            <person name="Whittaker M.M."/>
            <person name="Arp D.J."/>
        </authorList>
    </citation>
    <scope>NUCLEOTIDE SEQUENCE [LARGE SCALE GENOMIC DNA]</scope>
    <source>
        <strain>ATCC 19718 / CIP 103999 / KCTC 2705 / NBRC 14298</strain>
    </source>
</reference>
<organism>
    <name type="scientific">Nitrosomonas europaea (strain ATCC 19718 / CIP 103999 / KCTC 2705 / NBRC 14298)</name>
    <dbReference type="NCBI Taxonomy" id="228410"/>
    <lineage>
        <taxon>Bacteria</taxon>
        <taxon>Pseudomonadati</taxon>
        <taxon>Pseudomonadota</taxon>
        <taxon>Betaproteobacteria</taxon>
        <taxon>Nitrosomonadales</taxon>
        <taxon>Nitrosomonadaceae</taxon>
        <taxon>Nitrosomonas</taxon>
    </lineage>
</organism>
<comment type="function">
    <text evidence="1">Catalyzes the decarboxylation of 3-octaprenyl-4-hydroxy benzoate to 2-octaprenylphenol, an intermediate step in ubiquinone biosynthesis.</text>
</comment>
<comment type="catalytic activity">
    <reaction evidence="1">
        <text>a 4-hydroxy-3-(all-trans-polyprenyl)benzoate + H(+) = a 2-(all-trans-polyprenyl)phenol + CO2</text>
        <dbReference type="Rhea" id="RHEA:41680"/>
        <dbReference type="Rhea" id="RHEA-COMP:9514"/>
        <dbReference type="Rhea" id="RHEA-COMP:9516"/>
        <dbReference type="ChEBI" id="CHEBI:1269"/>
        <dbReference type="ChEBI" id="CHEBI:15378"/>
        <dbReference type="ChEBI" id="CHEBI:16526"/>
        <dbReference type="ChEBI" id="CHEBI:78396"/>
        <dbReference type="EC" id="4.1.1.98"/>
    </reaction>
</comment>
<comment type="cofactor">
    <cofactor evidence="1">
        <name>prenylated FMN</name>
        <dbReference type="ChEBI" id="CHEBI:87746"/>
    </cofactor>
    <text evidence="1">Binds 1 prenylated FMN per subunit.</text>
</comment>
<comment type="cofactor">
    <cofactor evidence="1">
        <name>Mn(2+)</name>
        <dbReference type="ChEBI" id="CHEBI:29035"/>
    </cofactor>
</comment>
<comment type="pathway">
    <text evidence="1">Cofactor biosynthesis; ubiquinone biosynthesis.</text>
</comment>
<comment type="subunit">
    <text evidence="1">Homohexamer.</text>
</comment>
<comment type="subcellular location">
    <subcellularLocation>
        <location evidence="1">Cell membrane</location>
        <topology evidence="1">Peripheral membrane protein</topology>
    </subcellularLocation>
</comment>
<comment type="similarity">
    <text evidence="1">Belongs to the UbiD family.</text>
</comment>